<proteinExistence type="inferred from homology"/>
<reference key="1">
    <citation type="submission" date="2006-08" db="EMBL/GenBank/DDBJ databases">
        <title>Complete sequence of chromosome 1 of Shewanella sp. MR-7.</title>
        <authorList>
            <person name="Copeland A."/>
            <person name="Lucas S."/>
            <person name="Lapidus A."/>
            <person name="Barry K."/>
            <person name="Detter J.C."/>
            <person name="Glavina del Rio T."/>
            <person name="Hammon N."/>
            <person name="Israni S."/>
            <person name="Dalin E."/>
            <person name="Tice H."/>
            <person name="Pitluck S."/>
            <person name="Kiss H."/>
            <person name="Brettin T."/>
            <person name="Bruce D."/>
            <person name="Han C."/>
            <person name="Tapia R."/>
            <person name="Gilna P."/>
            <person name="Schmutz J."/>
            <person name="Larimer F."/>
            <person name="Land M."/>
            <person name="Hauser L."/>
            <person name="Kyrpides N."/>
            <person name="Mikhailova N."/>
            <person name="Nealson K."/>
            <person name="Konstantinidis K."/>
            <person name="Klappenbach J."/>
            <person name="Tiedje J."/>
            <person name="Richardson P."/>
        </authorList>
    </citation>
    <scope>NUCLEOTIDE SEQUENCE [LARGE SCALE GENOMIC DNA]</scope>
    <source>
        <strain>MR-7</strain>
    </source>
</reference>
<sequence length="861" mass="96141">MNPIDTDDLEKHTPMMRQYLTMKAEHHDMLLFYRMGDFYELFYDDAKRASELLGISLTARGKSGGDPIPMAGIPYHAVEGYLAKLVQIGQSVAICEQIGDPATSKGPVERKVVRIVTPGTLTDEALLQERQDNLLAAVYQGKVGFGYATLDVSSGRFVIAELETKESLEAELQRTNPVEILYSEDFDAMELLHHFKGKRRRPEWEFDYDTSIKLLLAQFGTKDLHGFGITDARLSLQAAGCLMQYVKDTQRTALPHINAITRFNQTDTIVLDAATRRNLELTQNLSGGRDNTLAAVLDNTATAMGSRMLQRWIHQPLRDHAQIFARQTAVNELLETTAHESLHEQLKALGDIERIMARLALRTARPRDFARLRQALNLLPQLQQSLAQLSAPHTVKLGQLLGEFPEEQQLLERAIVDNPPMLIRDGGVIREGYNAELDEWRGLSEGATDYLVQLEAREKERTGIATLKVGYNRVHGYYIEVSRLQSQQVPLNYQRRQTLKNMERYITPELKEYEEKVLSSQGKALALEKQLWDELFDLILPKLHELQAFARAAAELDVLSNFAERAETLGYTCPELSSEIGVKIEAGRHPVVERVSQTPFIANPVTLHNQRRMLIVTGPNMGGKSTYMRQVALITLMAHIGCFVSADRAIIGPIDRIFTRIGASDDLASGRSTFMVEMTETANILHNATAQSLVLMDEIGRGTSTYDGLSLAWSAAEYLAQQIGAMTLFATHYFELTQLPELMAGVYNVHLDAIEHEDTIAFMHAVQEGAASKSYGLQVASLAGVPARVIKAAKHKLHQLESRDHQVEGVNVNGTRAPIQTLLALPEPVENPAVSKLKAINPDNLTPKQALDLLYELKRLS</sequence>
<name>MUTS_SHESR</name>
<accession>Q0HXG1</accession>
<gene>
    <name evidence="1" type="primary">mutS</name>
    <name type="ordered locus">Shewmr7_1195</name>
</gene>
<dbReference type="EMBL" id="CP000444">
    <property type="protein sequence ID" value="ABI42194.1"/>
    <property type="molecule type" value="Genomic_DNA"/>
</dbReference>
<dbReference type="SMR" id="Q0HXG1"/>
<dbReference type="KEGG" id="shm:Shewmr7_1195"/>
<dbReference type="HOGENOM" id="CLU_002472_4_0_6"/>
<dbReference type="GO" id="GO:0005829">
    <property type="term" value="C:cytosol"/>
    <property type="evidence" value="ECO:0007669"/>
    <property type="project" value="TreeGrafter"/>
</dbReference>
<dbReference type="GO" id="GO:0005524">
    <property type="term" value="F:ATP binding"/>
    <property type="evidence" value="ECO:0007669"/>
    <property type="project" value="UniProtKB-UniRule"/>
</dbReference>
<dbReference type="GO" id="GO:0140664">
    <property type="term" value="F:ATP-dependent DNA damage sensor activity"/>
    <property type="evidence" value="ECO:0007669"/>
    <property type="project" value="InterPro"/>
</dbReference>
<dbReference type="GO" id="GO:0003684">
    <property type="term" value="F:damaged DNA binding"/>
    <property type="evidence" value="ECO:0007669"/>
    <property type="project" value="UniProtKB-UniRule"/>
</dbReference>
<dbReference type="GO" id="GO:0030983">
    <property type="term" value="F:mismatched DNA binding"/>
    <property type="evidence" value="ECO:0007669"/>
    <property type="project" value="InterPro"/>
</dbReference>
<dbReference type="GO" id="GO:0006298">
    <property type="term" value="P:mismatch repair"/>
    <property type="evidence" value="ECO:0007669"/>
    <property type="project" value="UniProtKB-UniRule"/>
</dbReference>
<dbReference type="CDD" id="cd03284">
    <property type="entry name" value="ABC_MutS1"/>
    <property type="match status" value="1"/>
</dbReference>
<dbReference type="FunFam" id="1.10.1420.10:FF:000002">
    <property type="entry name" value="DNA mismatch repair protein MutS"/>
    <property type="match status" value="1"/>
</dbReference>
<dbReference type="FunFam" id="3.30.420.110:FF:000001">
    <property type="entry name" value="DNA mismatch repair protein MutS"/>
    <property type="match status" value="1"/>
</dbReference>
<dbReference type="FunFam" id="3.40.1170.10:FF:000001">
    <property type="entry name" value="DNA mismatch repair protein MutS"/>
    <property type="match status" value="1"/>
</dbReference>
<dbReference type="FunFam" id="3.40.50.300:FF:000283">
    <property type="entry name" value="DNA mismatch repair protein MutS"/>
    <property type="match status" value="1"/>
</dbReference>
<dbReference type="Gene3D" id="1.10.1420.10">
    <property type="match status" value="2"/>
</dbReference>
<dbReference type="Gene3D" id="6.10.140.430">
    <property type="match status" value="1"/>
</dbReference>
<dbReference type="Gene3D" id="3.40.1170.10">
    <property type="entry name" value="DNA repair protein MutS, domain I"/>
    <property type="match status" value="1"/>
</dbReference>
<dbReference type="Gene3D" id="3.30.420.110">
    <property type="entry name" value="MutS, connector domain"/>
    <property type="match status" value="1"/>
</dbReference>
<dbReference type="Gene3D" id="3.40.50.300">
    <property type="entry name" value="P-loop containing nucleotide triphosphate hydrolases"/>
    <property type="match status" value="1"/>
</dbReference>
<dbReference type="HAMAP" id="MF_00096">
    <property type="entry name" value="MutS"/>
    <property type="match status" value="1"/>
</dbReference>
<dbReference type="InterPro" id="IPR005748">
    <property type="entry name" value="DNA_mismatch_repair_MutS"/>
</dbReference>
<dbReference type="InterPro" id="IPR007695">
    <property type="entry name" value="DNA_mismatch_repair_MutS-lik_N"/>
</dbReference>
<dbReference type="InterPro" id="IPR017261">
    <property type="entry name" value="DNA_mismatch_repair_MutS/MSH"/>
</dbReference>
<dbReference type="InterPro" id="IPR000432">
    <property type="entry name" value="DNA_mismatch_repair_MutS_C"/>
</dbReference>
<dbReference type="InterPro" id="IPR007861">
    <property type="entry name" value="DNA_mismatch_repair_MutS_clamp"/>
</dbReference>
<dbReference type="InterPro" id="IPR007696">
    <property type="entry name" value="DNA_mismatch_repair_MutS_core"/>
</dbReference>
<dbReference type="InterPro" id="IPR016151">
    <property type="entry name" value="DNA_mismatch_repair_MutS_N"/>
</dbReference>
<dbReference type="InterPro" id="IPR036187">
    <property type="entry name" value="DNA_mismatch_repair_MutS_sf"/>
</dbReference>
<dbReference type="InterPro" id="IPR007860">
    <property type="entry name" value="DNA_mmatch_repair_MutS_con_dom"/>
</dbReference>
<dbReference type="InterPro" id="IPR045076">
    <property type="entry name" value="MutS"/>
</dbReference>
<dbReference type="InterPro" id="IPR036678">
    <property type="entry name" value="MutS_con_dom_sf"/>
</dbReference>
<dbReference type="InterPro" id="IPR027417">
    <property type="entry name" value="P-loop_NTPase"/>
</dbReference>
<dbReference type="NCBIfam" id="TIGR01070">
    <property type="entry name" value="mutS1"/>
    <property type="match status" value="1"/>
</dbReference>
<dbReference type="NCBIfam" id="NF003810">
    <property type="entry name" value="PRK05399.1"/>
    <property type="match status" value="1"/>
</dbReference>
<dbReference type="PANTHER" id="PTHR11361:SF34">
    <property type="entry name" value="DNA MISMATCH REPAIR PROTEIN MSH1, MITOCHONDRIAL"/>
    <property type="match status" value="1"/>
</dbReference>
<dbReference type="PANTHER" id="PTHR11361">
    <property type="entry name" value="DNA MISMATCH REPAIR PROTEIN MUTS FAMILY MEMBER"/>
    <property type="match status" value="1"/>
</dbReference>
<dbReference type="Pfam" id="PF01624">
    <property type="entry name" value="MutS_I"/>
    <property type="match status" value="1"/>
</dbReference>
<dbReference type="Pfam" id="PF05188">
    <property type="entry name" value="MutS_II"/>
    <property type="match status" value="1"/>
</dbReference>
<dbReference type="Pfam" id="PF05192">
    <property type="entry name" value="MutS_III"/>
    <property type="match status" value="1"/>
</dbReference>
<dbReference type="Pfam" id="PF05190">
    <property type="entry name" value="MutS_IV"/>
    <property type="match status" value="1"/>
</dbReference>
<dbReference type="Pfam" id="PF00488">
    <property type="entry name" value="MutS_V"/>
    <property type="match status" value="1"/>
</dbReference>
<dbReference type="PIRSF" id="PIRSF037677">
    <property type="entry name" value="DNA_mis_repair_Msh6"/>
    <property type="match status" value="1"/>
</dbReference>
<dbReference type="SMART" id="SM00534">
    <property type="entry name" value="MUTSac"/>
    <property type="match status" value="1"/>
</dbReference>
<dbReference type="SMART" id="SM00533">
    <property type="entry name" value="MUTSd"/>
    <property type="match status" value="1"/>
</dbReference>
<dbReference type="SUPFAM" id="SSF55271">
    <property type="entry name" value="DNA repair protein MutS, domain I"/>
    <property type="match status" value="1"/>
</dbReference>
<dbReference type="SUPFAM" id="SSF53150">
    <property type="entry name" value="DNA repair protein MutS, domain II"/>
    <property type="match status" value="1"/>
</dbReference>
<dbReference type="SUPFAM" id="SSF48334">
    <property type="entry name" value="DNA repair protein MutS, domain III"/>
    <property type="match status" value="1"/>
</dbReference>
<dbReference type="SUPFAM" id="SSF52540">
    <property type="entry name" value="P-loop containing nucleoside triphosphate hydrolases"/>
    <property type="match status" value="1"/>
</dbReference>
<dbReference type="PROSITE" id="PS00486">
    <property type="entry name" value="DNA_MISMATCH_REPAIR_2"/>
    <property type="match status" value="1"/>
</dbReference>
<comment type="function">
    <text evidence="1">This protein is involved in the repair of mismatches in DNA. It is possible that it carries out the mismatch recognition step. This protein has a weak ATPase activity.</text>
</comment>
<comment type="similarity">
    <text evidence="1">Belongs to the DNA mismatch repair MutS family.</text>
</comment>
<protein>
    <recommendedName>
        <fullName evidence="1">DNA mismatch repair protein MutS</fullName>
    </recommendedName>
</protein>
<keyword id="KW-0067">ATP-binding</keyword>
<keyword id="KW-0227">DNA damage</keyword>
<keyword id="KW-0234">DNA repair</keyword>
<keyword id="KW-0238">DNA-binding</keyword>
<keyword id="KW-0547">Nucleotide-binding</keyword>
<evidence type="ECO:0000255" key="1">
    <source>
        <dbReference type="HAMAP-Rule" id="MF_00096"/>
    </source>
</evidence>
<feature type="chain" id="PRO_1000008099" description="DNA mismatch repair protein MutS">
    <location>
        <begin position="1"/>
        <end position="861"/>
    </location>
</feature>
<feature type="binding site" evidence="1">
    <location>
        <begin position="618"/>
        <end position="625"/>
    </location>
    <ligand>
        <name>ATP</name>
        <dbReference type="ChEBI" id="CHEBI:30616"/>
    </ligand>
</feature>
<organism>
    <name type="scientific">Shewanella sp. (strain MR-7)</name>
    <dbReference type="NCBI Taxonomy" id="60481"/>
    <lineage>
        <taxon>Bacteria</taxon>
        <taxon>Pseudomonadati</taxon>
        <taxon>Pseudomonadota</taxon>
        <taxon>Gammaproteobacteria</taxon>
        <taxon>Alteromonadales</taxon>
        <taxon>Shewanellaceae</taxon>
        <taxon>Shewanella</taxon>
    </lineage>
</organism>